<feature type="chain" id="PRO_0000340939" description="4-hydroxy-tetrahydrodipicolinate synthase">
    <location>
        <begin position="1"/>
        <end position="297"/>
    </location>
</feature>
<feature type="active site" description="Proton donor/acceptor" evidence="1">
    <location>
        <position position="136"/>
    </location>
</feature>
<feature type="active site" description="Schiff-base intermediate with substrate" evidence="1">
    <location>
        <position position="165"/>
    </location>
</feature>
<feature type="binding site" evidence="1">
    <location>
        <position position="47"/>
    </location>
    <ligand>
        <name>pyruvate</name>
        <dbReference type="ChEBI" id="CHEBI:15361"/>
    </ligand>
</feature>
<feature type="binding site" evidence="1">
    <location>
        <position position="206"/>
    </location>
    <ligand>
        <name>pyruvate</name>
        <dbReference type="ChEBI" id="CHEBI:15361"/>
    </ligand>
</feature>
<feature type="site" description="Part of a proton relay during catalysis" evidence="1">
    <location>
        <position position="46"/>
    </location>
</feature>
<feature type="site" description="Part of a proton relay during catalysis" evidence="1">
    <location>
        <position position="110"/>
    </location>
</feature>
<gene>
    <name evidence="1" type="primary">dapA</name>
    <name type="ordered locus">Ccur92_08980</name>
    <name type="ORF">CCV52592_1138</name>
</gene>
<proteinExistence type="inferred from homology"/>
<evidence type="ECO:0000255" key="1">
    <source>
        <dbReference type="HAMAP-Rule" id="MF_00418"/>
    </source>
</evidence>
<evidence type="ECO:0000305" key="2"/>
<protein>
    <recommendedName>
        <fullName evidence="1">4-hydroxy-tetrahydrodipicolinate synthase</fullName>
        <shortName evidence="1">HTPA synthase</shortName>
        <ecNumber evidence="1">4.3.3.7</ecNumber>
    </recommendedName>
</protein>
<reference key="1">
    <citation type="submission" date="2007-07" db="EMBL/GenBank/DDBJ databases">
        <title>Genome sequence of Campylobacter curvus 525.92 isolated from human feces.</title>
        <authorList>
            <person name="Fouts D.E."/>
            <person name="Mongodin E.F."/>
            <person name="Puiu D."/>
            <person name="Sebastian Y."/>
            <person name="Miller W.G."/>
            <person name="Mandrell R.E."/>
            <person name="Lastovica A.J."/>
            <person name="Nelson K.E."/>
        </authorList>
    </citation>
    <scope>NUCLEOTIDE SEQUENCE [LARGE SCALE GENOMIC DNA]</scope>
    <source>
        <strain>525.92</strain>
    </source>
</reference>
<sequence>MKNILQGAMTALITPFKNGKLDEETFEKLIKRQIKNGIDVVVPVGTTGESATLTHNEHKICIEIAVNACKDTNVKVLAGAGSNATHEAIDFAKFAQSHGADGILSVAPYYNKPTQEGLYQHYKAIAESIDIPVLLYNVPGRVGVDILPSTVFRLFKECKNIFGIKEATGSIDRCVDLLAHEPNLVVISGEDAINYPILSNGGKGVISVTANLLPDYICELTHLALDEEYTKAKAINDKLYNINKILFCESNPIPIKAAMYIAGLIGNLEYRLPLCEPSSENFKKIEQTMKNYEIKGF</sequence>
<comment type="function">
    <text evidence="1">Catalyzes the condensation of (S)-aspartate-beta-semialdehyde [(S)-ASA] and pyruvate to 4-hydroxy-tetrahydrodipicolinate (HTPA).</text>
</comment>
<comment type="catalytic activity">
    <reaction evidence="1">
        <text>L-aspartate 4-semialdehyde + pyruvate = (2S,4S)-4-hydroxy-2,3,4,5-tetrahydrodipicolinate + H2O + H(+)</text>
        <dbReference type="Rhea" id="RHEA:34171"/>
        <dbReference type="ChEBI" id="CHEBI:15361"/>
        <dbReference type="ChEBI" id="CHEBI:15377"/>
        <dbReference type="ChEBI" id="CHEBI:15378"/>
        <dbReference type="ChEBI" id="CHEBI:67139"/>
        <dbReference type="ChEBI" id="CHEBI:537519"/>
        <dbReference type="EC" id="4.3.3.7"/>
    </reaction>
</comment>
<comment type="pathway">
    <text evidence="1">Amino-acid biosynthesis; L-lysine biosynthesis via DAP pathway; (S)-tetrahydrodipicolinate from L-aspartate: step 3/4.</text>
</comment>
<comment type="subunit">
    <text evidence="1">Homotetramer; dimer of dimers.</text>
</comment>
<comment type="subcellular location">
    <subcellularLocation>
        <location evidence="1">Cytoplasm</location>
    </subcellularLocation>
</comment>
<comment type="similarity">
    <text evidence="1">Belongs to the DapA family.</text>
</comment>
<comment type="caution">
    <text evidence="2">Was originally thought to be a dihydrodipicolinate synthase (DHDPS), catalyzing the condensation of (S)-aspartate-beta-semialdehyde [(S)-ASA] and pyruvate to dihydrodipicolinate (DHDP). However, it was shown in E.coli that the product of the enzymatic reaction is not dihydrodipicolinate but in fact (4S)-4-hydroxy-2,3,4,5-tetrahydro-(2S)-dipicolinic acid (HTPA), and that the consecutive dehydration reaction leading to DHDP is not spontaneous but catalyzed by DapB.</text>
</comment>
<dbReference type="EC" id="4.3.3.7" evidence="1"/>
<dbReference type="EMBL" id="CP000767">
    <property type="protein sequence ID" value="EAT99812.1"/>
    <property type="molecule type" value="Genomic_DNA"/>
</dbReference>
<dbReference type="RefSeq" id="WP_011992250.1">
    <property type="nucleotide sequence ID" value="NC_009715.2"/>
</dbReference>
<dbReference type="SMR" id="A7GYB0"/>
<dbReference type="STRING" id="360105.CCV52592_1138"/>
<dbReference type="GeneID" id="61002195"/>
<dbReference type="KEGG" id="ccv:CCV52592_1138"/>
<dbReference type="HOGENOM" id="CLU_049343_7_1_7"/>
<dbReference type="OrthoDB" id="9782828at2"/>
<dbReference type="UniPathway" id="UPA00034">
    <property type="reaction ID" value="UER00017"/>
</dbReference>
<dbReference type="Proteomes" id="UP000006380">
    <property type="component" value="Chromosome"/>
</dbReference>
<dbReference type="GO" id="GO:0005829">
    <property type="term" value="C:cytosol"/>
    <property type="evidence" value="ECO:0007669"/>
    <property type="project" value="TreeGrafter"/>
</dbReference>
<dbReference type="GO" id="GO:0008840">
    <property type="term" value="F:4-hydroxy-tetrahydrodipicolinate synthase activity"/>
    <property type="evidence" value="ECO:0007669"/>
    <property type="project" value="UniProtKB-UniRule"/>
</dbReference>
<dbReference type="GO" id="GO:0019877">
    <property type="term" value="P:diaminopimelate biosynthetic process"/>
    <property type="evidence" value="ECO:0007669"/>
    <property type="project" value="UniProtKB-UniRule"/>
</dbReference>
<dbReference type="GO" id="GO:0009089">
    <property type="term" value="P:lysine biosynthetic process via diaminopimelate"/>
    <property type="evidence" value="ECO:0007669"/>
    <property type="project" value="UniProtKB-UniRule"/>
</dbReference>
<dbReference type="CDD" id="cd00950">
    <property type="entry name" value="DHDPS"/>
    <property type="match status" value="1"/>
</dbReference>
<dbReference type="Gene3D" id="3.20.20.70">
    <property type="entry name" value="Aldolase class I"/>
    <property type="match status" value="1"/>
</dbReference>
<dbReference type="HAMAP" id="MF_00418">
    <property type="entry name" value="DapA"/>
    <property type="match status" value="1"/>
</dbReference>
<dbReference type="InterPro" id="IPR013785">
    <property type="entry name" value="Aldolase_TIM"/>
</dbReference>
<dbReference type="InterPro" id="IPR005263">
    <property type="entry name" value="DapA"/>
</dbReference>
<dbReference type="InterPro" id="IPR002220">
    <property type="entry name" value="DapA-like"/>
</dbReference>
<dbReference type="InterPro" id="IPR020625">
    <property type="entry name" value="Schiff_base-form_aldolases_AS"/>
</dbReference>
<dbReference type="NCBIfam" id="TIGR00674">
    <property type="entry name" value="dapA"/>
    <property type="match status" value="1"/>
</dbReference>
<dbReference type="PANTHER" id="PTHR12128:SF66">
    <property type="entry name" value="4-HYDROXY-2-OXOGLUTARATE ALDOLASE, MITOCHONDRIAL"/>
    <property type="match status" value="1"/>
</dbReference>
<dbReference type="PANTHER" id="PTHR12128">
    <property type="entry name" value="DIHYDRODIPICOLINATE SYNTHASE"/>
    <property type="match status" value="1"/>
</dbReference>
<dbReference type="Pfam" id="PF00701">
    <property type="entry name" value="DHDPS"/>
    <property type="match status" value="1"/>
</dbReference>
<dbReference type="PIRSF" id="PIRSF001365">
    <property type="entry name" value="DHDPS"/>
    <property type="match status" value="1"/>
</dbReference>
<dbReference type="PRINTS" id="PR00146">
    <property type="entry name" value="DHPICSNTHASE"/>
</dbReference>
<dbReference type="SMART" id="SM01130">
    <property type="entry name" value="DHDPS"/>
    <property type="match status" value="1"/>
</dbReference>
<dbReference type="SUPFAM" id="SSF51569">
    <property type="entry name" value="Aldolase"/>
    <property type="match status" value="1"/>
</dbReference>
<dbReference type="PROSITE" id="PS00666">
    <property type="entry name" value="DHDPS_2"/>
    <property type="match status" value="1"/>
</dbReference>
<accession>A7GYB0</accession>
<keyword id="KW-0028">Amino-acid biosynthesis</keyword>
<keyword id="KW-0963">Cytoplasm</keyword>
<keyword id="KW-0220">Diaminopimelate biosynthesis</keyword>
<keyword id="KW-0456">Lyase</keyword>
<keyword id="KW-0457">Lysine biosynthesis</keyword>
<keyword id="KW-1185">Reference proteome</keyword>
<keyword id="KW-0704">Schiff base</keyword>
<organism>
    <name type="scientific">Campylobacter curvus (strain 525.92)</name>
    <dbReference type="NCBI Taxonomy" id="360105"/>
    <lineage>
        <taxon>Bacteria</taxon>
        <taxon>Pseudomonadati</taxon>
        <taxon>Campylobacterota</taxon>
        <taxon>Epsilonproteobacteria</taxon>
        <taxon>Campylobacterales</taxon>
        <taxon>Campylobacteraceae</taxon>
        <taxon>Campylobacter</taxon>
    </lineage>
</organism>
<name>DAPA_CAMC5</name>